<comment type="function">
    <text evidence="1">Binds to the 23S rRNA.</text>
</comment>
<comment type="subunit">
    <text evidence="1">Part of the 50S ribosomal subunit.</text>
</comment>
<comment type="similarity">
    <text evidence="1">Belongs to the universal ribosomal protein uL15 family.</text>
</comment>
<comment type="sequence caution" evidence="3">
    <conflict type="erroneous initiation">
        <sequence resource="EMBL-CDS" id="ABD09985"/>
    </conflict>
</comment>
<dbReference type="EMBL" id="CP000249">
    <property type="protein sequence ID" value="ABD09985.1"/>
    <property type="status" value="ALT_INIT"/>
    <property type="molecule type" value="Genomic_DNA"/>
</dbReference>
<dbReference type="SMR" id="Q2JFF7"/>
<dbReference type="STRING" id="106370.Francci3_0601"/>
<dbReference type="KEGG" id="fra:Francci3_0601"/>
<dbReference type="eggNOG" id="COG0200">
    <property type="taxonomic scope" value="Bacteria"/>
</dbReference>
<dbReference type="HOGENOM" id="CLU_055188_4_1_11"/>
<dbReference type="PhylomeDB" id="Q2JFF7"/>
<dbReference type="Proteomes" id="UP000001937">
    <property type="component" value="Chromosome"/>
</dbReference>
<dbReference type="GO" id="GO:0022625">
    <property type="term" value="C:cytosolic large ribosomal subunit"/>
    <property type="evidence" value="ECO:0007669"/>
    <property type="project" value="TreeGrafter"/>
</dbReference>
<dbReference type="GO" id="GO:0019843">
    <property type="term" value="F:rRNA binding"/>
    <property type="evidence" value="ECO:0007669"/>
    <property type="project" value="UniProtKB-UniRule"/>
</dbReference>
<dbReference type="GO" id="GO:0003735">
    <property type="term" value="F:structural constituent of ribosome"/>
    <property type="evidence" value="ECO:0007669"/>
    <property type="project" value="InterPro"/>
</dbReference>
<dbReference type="GO" id="GO:0006412">
    <property type="term" value="P:translation"/>
    <property type="evidence" value="ECO:0007669"/>
    <property type="project" value="UniProtKB-UniRule"/>
</dbReference>
<dbReference type="FunFam" id="3.100.10.10:FF:000005">
    <property type="entry name" value="50S ribosomal protein L15"/>
    <property type="match status" value="1"/>
</dbReference>
<dbReference type="Gene3D" id="3.100.10.10">
    <property type="match status" value="1"/>
</dbReference>
<dbReference type="HAMAP" id="MF_01341">
    <property type="entry name" value="Ribosomal_uL15"/>
    <property type="match status" value="1"/>
</dbReference>
<dbReference type="InterPro" id="IPR030878">
    <property type="entry name" value="Ribosomal_uL15"/>
</dbReference>
<dbReference type="InterPro" id="IPR021131">
    <property type="entry name" value="Ribosomal_uL15/eL18"/>
</dbReference>
<dbReference type="InterPro" id="IPR036227">
    <property type="entry name" value="Ribosomal_uL15/eL18_sf"/>
</dbReference>
<dbReference type="InterPro" id="IPR005749">
    <property type="entry name" value="Ribosomal_uL15_bac-type"/>
</dbReference>
<dbReference type="InterPro" id="IPR001196">
    <property type="entry name" value="Ribosomal_uL15_CS"/>
</dbReference>
<dbReference type="NCBIfam" id="TIGR01071">
    <property type="entry name" value="rplO_bact"/>
    <property type="match status" value="1"/>
</dbReference>
<dbReference type="PANTHER" id="PTHR12934">
    <property type="entry name" value="50S RIBOSOMAL PROTEIN L15"/>
    <property type="match status" value="1"/>
</dbReference>
<dbReference type="PANTHER" id="PTHR12934:SF11">
    <property type="entry name" value="LARGE RIBOSOMAL SUBUNIT PROTEIN UL15M"/>
    <property type="match status" value="1"/>
</dbReference>
<dbReference type="Pfam" id="PF00828">
    <property type="entry name" value="Ribosomal_L27A"/>
    <property type="match status" value="1"/>
</dbReference>
<dbReference type="SUPFAM" id="SSF52080">
    <property type="entry name" value="Ribosomal proteins L15p and L18e"/>
    <property type="match status" value="1"/>
</dbReference>
<dbReference type="PROSITE" id="PS00475">
    <property type="entry name" value="RIBOSOMAL_L15"/>
    <property type="match status" value="1"/>
</dbReference>
<proteinExistence type="inferred from homology"/>
<organism>
    <name type="scientific">Frankia casuarinae (strain DSM 45818 / CECT 9043 / HFP020203 / CcI3)</name>
    <dbReference type="NCBI Taxonomy" id="106370"/>
    <lineage>
        <taxon>Bacteria</taxon>
        <taxon>Bacillati</taxon>
        <taxon>Actinomycetota</taxon>
        <taxon>Actinomycetes</taxon>
        <taxon>Frankiales</taxon>
        <taxon>Frankiaceae</taxon>
        <taxon>Frankia</taxon>
    </lineage>
</organism>
<reference key="1">
    <citation type="journal article" date="2007" name="Genome Res.">
        <title>Genome characteristics of facultatively symbiotic Frankia sp. strains reflect host range and host plant biogeography.</title>
        <authorList>
            <person name="Normand P."/>
            <person name="Lapierre P."/>
            <person name="Tisa L.S."/>
            <person name="Gogarten J.P."/>
            <person name="Alloisio N."/>
            <person name="Bagnarol E."/>
            <person name="Bassi C.A."/>
            <person name="Berry A.M."/>
            <person name="Bickhart D.M."/>
            <person name="Choisne N."/>
            <person name="Couloux A."/>
            <person name="Cournoyer B."/>
            <person name="Cruveiller S."/>
            <person name="Daubin V."/>
            <person name="Demange N."/>
            <person name="Francino M.P."/>
            <person name="Goltsman E."/>
            <person name="Huang Y."/>
            <person name="Kopp O.R."/>
            <person name="Labarre L."/>
            <person name="Lapidus A."/>
            <person name="Lavire C."/>
            <person name="Marechal J."/>
            <person name="Martinez M."/>
            <person name="Mastronunzio J.E."/>
            <person name="Mullin B.C."/>
            <person name="Niemann J."/>
            <person name="Pujic P."/>
            <person name="Rawnsley T."/>
            <person name="Rouy Z."/>
            <person name="Schenowitz C."/>
            <person name="Sellstedt A."/>
            <person name="Tavares F."/>
            <person name="Tomkins J.P."/>
            <person name="Vallenet D."/>
            <person name="Valverde C."/>
            <person name="Wall L.G."/>
            <person name="Wang Y."/>
            <person name="Medigue C."/>
            <person name="Benson D.R."/>
        </authorList>
    </citation>
    <scope>NUCLEOTIDE SEQUENCE [LARGE SCALE GENOMIC DNA]</scope>
    <source>
        <strain>DSM 45818 / CECT 9043 / HFP020203 / CcI3</strain>
    </source>
</reference>
<gene>
    <name evidence="1" type="primary">rplO</name>
    <name type="ordered locus">Francci3_0601</name>
</gene>
<sequence>MGTEAGSAPVVRGRGLKVHHLRPAPGAHKSKIRVGRGEGSKGKTAGRGTKGSKARKQVPARFEGGQMPLHMRLPKLKGFRNRFRVEYQVVNVATLAELFPQGGEVTKADLAARGAVRGKSPVKVLGNGDINVALHVSADAFSASAKEKIAAAGGSVTQS</sequence>
<feature type="chain" id="PRO_0000251515" description="Large ribosomal subunit protein uL15">
    <location>
        <begin position="1"/>
        <end position="159"/>
    </location>
</feature>
<feature type="region of interest" description="Disordered" evidence="2">
    <location>
        <begin position="21"/>
        <end position="55"/>
    </location>
</feature>
<feature type="compositionally biased region" description="Basic residues" evidence="2">
    <location>
        <begin position="21"/>
        <end position="34"/>
    </location>
</feature>
<accession>Q2JFF7</accession>
<name>RL15_FRACC</name>
<protein>
    <recommendedName>
        <fullName evidence="1">Large ribosomal subunit protein uL15</fullName>
    </recommendedName>
    <alternativeName>
        <fullName evidence="3">50S ribosomal protein L15</fullName>
    </alternativeName>
</protein>
<evidence type="ECO:0000255" key="1">
    <source>
        <dbReference type="HAMAP-Rule" id="MF_01341"/>
    </source>
</evidence>
<evidence type="ECO:0000256" key="2">
    <source>
        <dbReference type="SAM" id="MobiDB-lite"/>
    </source>
</evidence>
<evidence type="ECO:0000305" key="3"/>
<keyword id="KW-1185">Reference proteome</keyword>
<keyword id="KW-0687">Ribonucleoprotein</keyword>
<keyword id="KW-0689">Ribosomal protein</keyword>
<keyword id="KW-0694">RNA-binding</keyword>
<keyword id="KW-0699">rRNA-binding</keyword>